<feature type="chain" id="PRO_0000204211" description="Regulator of G-protein signaling 11">
    <location>
        <begin position="1"/>
        <end position="443"/>
    </location>
</feature>
<feature type="domain" description="DEP" evidence="2">
    <location>
        <begin position="11"/>
        <end position="86"/>
    </location>
</feature>
<feature type="domain" description="G protein gamma">
    <location>
        <begin position="198"/>
        <end position="259"/>
    </location>
</feature>
<feature type="domain" description="RGS" evidence="3">
    <location>
        <begin position="280"/>
        <end position="395"/>
    </location>
</feature>
<feature type="region of interest" description="Disordered" evidence="4">
    <location>
        <begin position="418"/>
        <end position="443"/>
    </location>
</feature>
<feature type="compositionally biased region" description="Polar residues" evidence="4">
    <location>
        <begin position="418"/>
        <end position="437"/>
    </location>
</feature>
<feature type="splice variant" id="VSP_022239" description="In isoform 2." evidence="7">
    <location>
        <begin position="1"/>
        <end position="241"/>
    </location>
</feature>
<feature type="sequence conflict" description="In Ref. 3; AAC70012." evidence="8" ref="3">
    <original>R</original>
    <variation>M</variation>
    <location>
        <position position="83"/>
    </location>
</feature>
<feature type="sequence conflict" description="In Ref. 3; AAC70012." evidence="8" ref="3">
    <original>QK</original>
    <variation>HN</variation>
    <location>
        <begin position="299"/>
        <end position="300"/>
    </location>
</feature>
<feature type="sequence conflict" description="In Ref. 2; AAH19741." evidence="8" ref="2">
    <original>D</original>
    <variation>N</variation>
    <location>
        <position position="441"/>
    </location>
</feature>
<organism>
    <name type="scientific">Mus musculus</name>
    <name type="common">Mouse</name>
    <dbReference type="NCBI Taxonomy" id="10090"/>
    <lineage>
        <taxon>Eukaryota</taxon>
        <taxon>Metazoa</taxon>
        <taxon>Chordata</taxon>
        <taxon>Craniata</taxon>
        <taxon>Vertebrata</taxon>
        <taxon>Euteleostomi</taxon>
        <taxon>Mammalia</taxon>
        <taxon>Eutheria</taxon>
        <taxon>Euarchontoglires</taxon>
        <taxon>Glires</taxon>
        <taxon>Rodentia</taxon>
        <taxon>Myomorpha</taxon>
        <taxon>Muroidea</taxon>
        <taxon>Muridae</taxon>
        <taxon>Murinae</taxon>
        <taxon>Mus</taxon>
        <taxon>Mus</taxon>
    </lineage>
</organism>
<name>RGS11_MOUSE</name>
<sequence length="443" mass="51075">MERVVVSMQDPDQGVKMRSQRLLITVIPHAVAGRDLVEWLVQKFCILEDEALHLGTLLAQHGYIYPLRESRDLTLRPDETPYRFQTPYFWTSTMWPAAELDYAIYLAKKNIQKQGALVDYEKEHYALLHKKINHAWDLVLMQAREQLRAAKQRRKGDRMVISCQEQTYWLVNKPPPGAPNILEQGPERGSYNPSHMQMSSDFYKCEIECFRKALGRNRVKSSACLEAYLKFSSQHGPHDPIMSGCLPSNPWITDDVTYWAMNAPNVAAPTKLRVERWSFSFRELLDDPVGRAHFMDFLQKEFSAENLSFWEACEELRFGGQAQVPTLVDSVYQQFLAPGAARWINIDSRTMERTLEGLRQPHRYVLDAAQLHIYMLMKKDSYPRFLKSDIYKGLLEEAVIPLETKRWPFPFLRKPLHSSPSPALQSTPREPAATSSPEGADGE</sequence>
<gene>
    <name type="primary">Rgs11</name>
</gene>
<accession>Q9Z2H1</accession>
<accession>Q8VCJ1</accession>
<reference key="1">
    <citation type="journal article" date="2009" name="PLoS Biol.">
        <title>Lineage-specific biology revealed by a finished genome assembly of the mouse.</title>
        <authorList>
            <person name="Church D.M."/>
            <person name="Goodstadt L."/>
            <person name="Hillier L.W."/>
            <person name="Zody M.C."/>
            <person name="Goldstein S."/>
            <person name="She X."/>
            <person name="Bult C.J."/>
            <person name="Agarwala R."/>
            <person name="Cherry J.L."/>
            <person name="DiCuccio M."/>
            <person name="Hlavina W."/>
            <person name="Kapustin Y."/>
            <person name="Meric P."/>
            <person name="Maglott D."/>
            <person name="Birtle Z."/>
            <person name="Marques A.C."/>
            <person name="Graves T."/>
            <person name="Zhou S."/>
            <person name="Teague B."/>
            <person name="Potamousis K."/>
            <person name="Churas C."/>
            <person name="Place M."/>
            <person name="Herschleb J."/>
            <person name="Runnheim R."/>
            <person name="Forrest D."/>
            <person name="Amos-Landgraf J."/>
            <person name="Schwartz D.C."/>
            <person name="Cheng Z."/>
            <person name="Lindblad-Toh K."/>
            <person name="Eichler E.E."/>
            <person name="Ponting C.P."/>
        </authorList>
    </citation>
    <scope>NUCLEOTIDE SEQUENCE [LARGE SCALE GENOMIC DNA]</scope>
    <source>
        <strain>C57BL/6J</strain>
    </source>
</reference>
<reference key="2">
    <citation type="journal article" date="2004" name="Genome Res.">
        <title>The status, quality, and expansion of the NIH full-length cDNA project: the Mammalian Gene Collection (MGC).</title>
        <authorList>
            <consortium name="The MGC Project Team"/>
        </authorList>
    </citation>
    <scope>NUCLEOTIDE SEQUENCE [LARGE SCALE MRNA] (ISOFORM 2)</scope>
    <source>
        <strain>FVB/N</strain>
        <tissue>Mammary gland</tissue>
    </source>
</reference>
<reference key="3">
    <citation type="submission" date="1998-04" db="EMBL/GenBank/DDBJ databases">
        <authorList>
            <person name="He W."/>
            <person name="Wensel T.G."/>
        </authorList>
    </citation>
    <scope>NUCLEOTIDE SEQUENCE [MRNA] OF 6-443 (ISOFORM 1)</scope>
</reference>
<reference key="4">
    <citation type="journal article" date="2005" name="J. Biol. Chem.">
        <title>R7BP, a novel neuronal protein interacting with RGS proteins of the R7 family.</title>
        <authorList>
            <person name="Martemyanov K.A."/>
            <person name="Yoo P.J."/>
            <person name="Skiba N.P."/>
            <person name="Arshavsky V.Y."/>
        </authorList>
    </citation>
    <scope>INTERACTION WITH RGS7BP</scope>
</reference>
<reference key="5">
    <citation type="journal article" date="2005" name="J. Cell Biol.">
        <title>Palmitoylation regulates plasma membrane-nuclear shuttling of R7BP, a novel membrane anchor for the RGS7 family.</title>
        <authorList>
            <person name="Drenan R.M."/>
            <person name="Doupnik C.A."/>
            <person name="Boyle M.P."/>
            <person name="Muglia L.J."/>
            <person name="Huettner J.E."/>
            <person name="Linder M.E."/>
            <person name="Blumer K.J."/>
        </authorList>
    </citation>
    <scope>INTERACTION WITH RGS7BP</scope>
</reference>
<dbReference type="EMBL" id="AC126438">
    <property type="status" value="NOT_ANNOTATED_CDS"/>
    <property type="molecule type" value="Genomic_DNA"/>
</dbReference>
<dbReference type="EMBL" id="BC019741">
    <property type="protein sequence ID" value="AAH19741.1"/>
    <property type="molecule type" value="mRNA"/>
</dbReference>
<dbReference type="EMBL" id="AF061934">
    <property type="protein sequence ID" value="AAC70012.1"/>
    <property type="molecule type" value="mRNA"/>
</dbReference>
<dbReference type="RefSeq" id="XP_017173057.1">
    <property type="nucleotide sequence ID" value="XM_017317568.1"/>
</dbReference>
<dbReference type="RefSeq" id="XP_017173058.1">
    <property type="nucleotide sequence ID" value="XM_017317569.1"/>
</dbReference>
<dbReference type="SMR" id="Q9Z2H1"/>
<dbReference type="CORUM" id="Q9Z2H1"/>
<dbReference type="FunCoup" id="Q9Z2H1">
    <property type="interactions" value="109"/>
</dbReference>
<dbReference type="STRING" id="10090.ENSMUSP00000025020"/>
<dbReference type="iPTMnet" id="Q9Z2H1"/>
<dbReference type="PhosphoSitePlus" id="Q9Z2H1"/>
<dbReference type="PaxDb" id="10090-ENSMUSP00000025020"/>
<dbReference type="UCSC" id="uc008bds.1">
    <molecule id="Q9Z2H1-1"/>
    <property type="organism name" value="mouse"/>
</dbReference>
<dbReference type="UCSC" id="uc008bdt.1">
    <molecule id="Q9Z2H1-2"/>
    <property type="organism name" value="mouse"/>
</dbReference>
<dbReference type="AGR" id="MGI:1354739"/>
<dbReference type="MGI" id="MGI:1354739">
    <property type="gene designation" value="Rgs11"/>
</dbReference>
<dbReference type="eggNOG" id="KOG3589">
    <property type="taxonomic scope" value="Eukaryota"/>
</dbReference>
<dbReference type="InParanoid" id="Q9Z2H1"/>
<dbReference type="PhylomeDB" id="Q9Z2H1"/>
<dbReference type="Reactome" id="R-MMU-418594">
    <property type="pathway name" value="G alpha (i) signalling events"/>
</dbReference>
<dbReference type="Reactome" id="R-MMU-6814122">
    <property type="pathway name" value="Cooperation of PDCL (PhLP1) and TRiC/CCT in G-protein beta folding"/>
</dbReference>
<dbReference type="BioGRID-ORCS" id="50782">
    <property type="hits" value="1 hit in 76 CRISPR screens"/>
</dbReference>
<dbReference type="ChiTaRS" id="Rgs11">
    <property type="organism name" value="mouse"/>
</dbReference>
<dbReference type="PRO" id="PR:Q9Z2H1"/>
<dbReference type="Proteomes" id="UP000000589">
    <property type="component" value="Unplaced"/>
</dbReference>
<dbReference type="RNAct" id="Q9Z2H1">
    <property type="molecule type" value="protein"/>
</dbReference>
<dbReference type="GO" id="GO:0051286">
    <property type="term" value="C:cell tip"/>
    <property type="evidence" value="ECO:0000314"/>
    <property type="project" value="MGI"/>
</dbReference>
<dbReference type="GO" id="GO:0030425">
    <property type="term" value="C:dendrite"/>
    <property type="evidence" value="ECO:0000314"/>
    <property type="project" value="MGI"/>
</dbReference>
<dbReference type="GO" id="GO:0044292">
    <property type="term" value="C:dendrite terminus"/>
    <property type="evidence" value="ECO:0000314"/>
    <property type="project" value="MGI"/>
</dbReference>
<dbReference type="GO" id="GO:0032991">
    <property type="term" value="C:protein-containing complex"/>
    <property type="evidence" value="ECO:0000266"/>
    <property type="project" value="MGI"/>
</dbReference>
<dbReference type="GO" id="GO:0005096">
    <property type="term" value="F:GTPase activator activity"/>
    <property type="evidence" value="ECO:0000304"/>
    <property type="project" value="MGI"/>
</dbReference>
<dbReference type="GO" id="GO:0007186">
    <property type="term" value="P:G protein-coupled receptor signaling pathway"/>
    <property type="evidence" value="ECO:0000304"/>
    <property type="project" value="MGI"/>
</dbReference>
<dbReference type="GO" id="GO:0035556">
    <property type="term" value="P:intracellular signal transduction"/>
    <property type="evidence" value="ECO:0007669"/>
    <property type="project" value="InterPro"/>
</dbReference>
<dbReference type="GO" id="GO:0009968">
    <property type="term" value="P:negative regulation of signal transduction"/>
    <property type="evidence" value="ECO:0007669"/>
    <property type="project" value="UniProtKB-KW"/>
</dbReference>
<dbReference type="GO" id="GO:0008277">
    <property type="term" value="P:regulation of G protein-coupled receptor signaling pathway"/>
    <property type="evidence" value="ECO:0007669"/>
    <property type="project" value="InterPro"/>
</dbReference>
<dbReference type="CDD" id="cd04450">
    <property type="entry name" value="DEP_RGS7-like"/>
    <property type="match status" value="1"/>
</dbReference>
<dbReference type="CDD" id="cd00068">
    <property type="entry name" value="GGL"/>
    <property type="match status" value="1"/>
</dbReference>
<dbReference type="FunFam" id="1.10.1240.60:FF:000001">
    <property type="entry name" value="Regulator of G-protein signaling 6"/>
    <property type="match status" value="1"/>
</dbReference>
<dbReference type="FunFam" id="1.10.167.10:FF:000002">
    <property type="entry name" value="Regulator of G-protein signaling 6 isoform 9"/>
    <property type="match status" value="1"/>
</dbReference>
<dbReference type="Gene3D" id="1.10.1240.60">
    <property type="match status" value="1"/>
</dbReference>
<dbReference type="Gene3D" id="1.10.167.10">
    <property type="entry name" value="Regulator of G-protein Signalling 4, domain 2"/>
    <property type="match status" value="1"/>
</dbReference>
<dbReference type="Gene3D" id="4.10.260.10">
    <property type="entry name" value="Transducin (heterotrimeric G protein), gamma chain"/>
    <property type="match status" value="1"/>
</dbReference>
<dbReference type="Gene3D" id="1.10.10.10">
    <property type="entry name" value="Winged helix-like DNA-binding domain superfamily/Winged helix DNA-binding domain"/>
    <property type="match status" value="1"/>
</dbReference>
<dbReference type="InterPro" id="IPR000591">
    <property type="entry name" value="DEP_dom"/>
</dbReference>
<dbReference type="InterPro" id="IPR015898">
    <property type="entry name" value="G-protein_gamma-like_dom"/>
</dbReference>
<dbReference type="InterPro" id="IPR036284">
    <property type="entry name" value="GGL_sf"/>
</dbReference>
<dbReference type="InterPro" id="IPR016137">
    <property type="entry name" value="RGS"/>
</dbReference>
<dbReference type="InterPro" id="IPR047016">
    <property type="entry name" value="RGS6/7/9/11"/>
</dbReference>
<dbReference type="InterPro" id="IPR047017">
    <property type="entry name" value="RGS6/7/9/11_DHEX_sf"/>
</dbReference>
<dbReference type="InterPro" id="IPR040759">
    <property type="entry name" value="RGS_DHEX"/>
</dbReference>
<dbReference type="InterPro" id="IPR036305">
    <property type="entry name" value="RGS_sf"/>
</dbReference>
<dbReference type="InterPro" id="IPR044926">
    <property type="entry name" value="RGS_subdomain_2"/>
</dbReference>
<dbReference type="InterPro" id="IPR036388">
    <property type="entry name" value="WH-like_DNA-bd_sf"/>
</dbReference>
<dbReference type="InterPro" id="IPR036390">
    <property type="entry name" value="WH_DNA-bd_sf"/>
</dbReference>
<dbReference type="PANTHER" id="PTHR45746">
    <property type="entry name" value="LP21163P"/>
    <property type="match status" value="1"/>
</dbReference>
<dbReference type="PANTHER" id="PTHR45746:SF3">
    <property type="entry name" value="REGULATOR OF G-PROTEIN SIGNALING 11"/>
    <property type="match status" value="1"/>
</dbReference>
<dbReference type="Pfam" id="PF00610">
    <property type="entry name" value="DEP"/>
    <property type="match status" value="1"/>
</dbReference>
<dbReference type="Pfam" id="PF00631">
    <property type="entry name" value="G-gamma"/>
    <property type="match status" value="1"/>
</dbReference>
<dbReference type="Pfam" id="PF00615">
    <property type="entry name" value="RGS"/>
    <property type="match status" value="1"/>
</dbReference>
<dbReference type="Pfam" id="PF18148">
    <property type="entry name" value="RGS_DHEX"/>
    <property type="match status" value="1"/>
</dbReference>
<dbReference type="PRINTS" id="PR01301">
    <property type="entry name" value="RGSPROTEIN"/>
</dbReference>
<dbReference type="SMART" id="SM00049">
    <property type="entry name" value="DEP"/>
    <property type="match status" value="1"/>
</dbReference>
<dbReference type="SMART" id="SM01224">
    <property type="entry name" value="G_gamma"/>
    <property type="match status" value="1"/>
</dbReference>
<dbReference type="SMART" id="SM00224">
    <property type="entry name" value="GGL"/>
    <property type="match status" value="1"/>
</dbReference>
<dbReference type="SMART" id="SM00315">
    <property type="entry name" value="RGS"/>
    <property type="match status" value="1"/>
</dbReference>
<dbReference type="SUPFAM" id="SSF48097">
    <property type="entry name" value="Regulator of G-protein signaling, RGS"/>
    <property type="match status" value="1"/>
</dbReference>
<dbReference type="SUPFAM" id="SSF48670">
    <property type="entry name" value="Transducin (heterotrimeric G protein), gamma chain"/>
    <property type="match status" value="1"/>
</dbReference>
<dbReference type="SUPFAM" id="SSF46785">
    <property type="entry name" value="Winged helix' DNA-binding domain"/>
    <property type="match status" value="1"/>
</dbReference>
<dbReference type="PROSITE" id="PS50186">
    <property type="entry name" value="DEP"/>
    <property type="match status" value="1"/>
</dbReference>
<dbReference type="PROSITE" id="PS50132">
    <property type="entry name" value="RGS"/>
    <property type="match status" value="1"/>
</dbReference>
<comment type="function">
    <text evidence="1">Inhibits signal transduction by increasing the GTPase activity of G protein alpha subunits thereby driving them into their inactive GDP-bound form.</text>
</comment>
<comment type="subunit">
    <text evidence="1 5 6">Heterodimer with Gbeta5 (By similarity). Interacts with RGS7BP, leading to regulate the subcellular location of the heterodimer formed with Gbeta5.</text>
</comment>
<comment type="alternative products">
    <event type="alternative splicing"/>
    <isoform>
        <id>Q9Z2H1-1</id>
        <name>1</name>
        <sequence type="displayed"/>
    </isoform>
    <isoform>
        <id>Q9Z2H1-2</id>
        <name>2</name>
        <sequence type="described" ref="VSP_022239"/>
    </isoform>
</comment>
<proteinExistence type="evidence at protein level"/>
<keyword id="KW-0025">Alternative splicing</keyword>
<keyword id="KW-1185">Reference proteome</keyword>
<keyword id="KW-0734">Signal transduction inhibitor</keyword>
<evidence type="ECO:0000250" key="1"/>
<evidence type="ECO:0000255" key="2">
    <source>
        <dbReference type="PROSITE-ProRule" id="PRU00066"/>
    </source>
</evidence>
<evidence type="ECO:0000255" key="3">
    <source>
        <dbReference type="PROSITE-ProRule" id="PRU00171"/>
    </source>
</evidence>
<evidence type="ECO:0000256" key="4">
    <source>
        <dbReference type="SAM" id="MobiDB-lite"/>
    </source>
</evidence>
<evidence type="ECO:0000269" key="5">
    <source>
    </source>
</evidence>
<evidence type="ECO:0000269" key="6">
    <source>
    </source>
</evidence>
<evidence type="ECO:0000303" key="7">
    <source>
    </source>
</evidence>
<evidence type="ECO:0000305" key="8"/>
<protein>
    <recommendedName>
        <fullName>Regulator of G-protein signaling 11</fullName>
    </recommendedName>
</protein>